<feature type="chain" id="PRO_0000066444" description="Esterase YqiA">
    <location>
        <begin position="1"/>
        <end position="193"/>
    </location>
</feature>
<evidence type="ECO:0000250" key="1"/>
<reference key="1">
    <citation type="journal article" date="2001" name="Nature">
        <title>Genome sequence of enterohaemorrhagic Escherichia coli O157:H7.</title>
        <authorList>
            <person name="Perna N.T."/>
            <person name="Plunkett G. III"/>
            <person name="Burland V."/>
            <person name="Mau B."/>
            <person name="Glasner J.D."/>
            <person name="Rose D.J."/>
            <person name="Mayhew G.F."/>
            <person name="Evans P.S."/>
            <person name="Gregor J."/>
            <person name="Kirkpatrick H.A."/>
            <person name="Posfai G."/>
            <person name="Hackett J."/>
            <person name="Klink S."/>
            <person name="Boutin A."/>
            <person name="Shao Y."/>
            <person name="Miller L."/>
            <person name="Grotbeck E.J."/>
            <person name="Davis N.W."/>
            <person name="Lim A."/>
            <person name="Dimalanta E.T."/>
            <person name="Potamousis K."/>
            <person name="Apodaca J."/>
            <person name="Anantharaman T.S."/>
            <person name="Lin J."/>
            <person name="Yen G."/>
            <person name="Schwartz D.C."/>
            <person name="Welch R.A."/>
            <person name="Blattner F.R."/>
        </authorList>
    </citation>
    <scope>NUCLEOTIDE SEQUENCE [LARGE SCALE GENOMIC DNA]</scope>
    <source>
        <strain>O157:H7 / EDL933 / ATCC 700927 / EHEC</strain>
    </source>
</reference>
<reference key="2">
    <citation type="journal article" date="2001" name="DNA Res.">
        <title>Complete genome sequence of enterohemorrhagic Escherichia coli O157:H7 and genomic comparison with a laboratory strain K-12.</title>
        <authorList>
            <person name="Hayashi T."/>
            <person name="Makino K."/>
            <person name="Ohnishi M."/>
            <person name="Kurokawa K."/>
            <person name="Ishii K."/>
            <person name="Yokoyama K."/>
            <person name="Han C.-G."/>
            <person name="Ohtsubo E."/>
            <person name="Nakayama K."/>
            <person name="Murata T."/>
            <person name="Tanaka M."/>
            <person name="Tobe T."/>
            <person name="Iida T."/>
            <person name="Takami H."/>
            <person name="Honda T."/>
            <person name="Sasakawa C."/>
            <person name="Ogasawara N."/>
            <person name="Yasunaga T."/>
            <person name="Kuhara S."/>
            <person name="Shiba T."/>
            <person name="Hattori M."/>
            <person name="Shinagawa H."/>
        </authorList>
    </citation>
    <scope>NUCLEOTIDE SEQUENCE [LARGE SCALE GENOMIC DNA]</scope>
    <source>
        <strain>O157:H7 / Sakai / RIMD 0509952 / EHEC</strain>
    </source>
</reference>
<proteinExistence type="inferred from homology"/>
<gene>
    <name type="primary">yqiA</name>
    <name type="ordered locus">Z4388</name>
    <name type="ordered locus">ECs3919</name>
</gene>
<accession>P0A8Z9</accession>
<accession>P36653</accession>
<keyword id="KW-0378">Hydrolase</keyword>
<keyword id="KW-1185">Reference proteome</keyword>
<keyword id="KW-0719">Serine esterase</keyword>
<organism>
    <name type="scientific">Escherichia coli O157:H7</name>
    <dbReference type="NCBI Taxonomy" id="83334"/>
    <lineage>
        <taxon>Bacteria</taxon>
        <taxon>Pseudomonadati</taxon>
        <taxon>Pseudomonadota</taxon>
        <taxon>Gammaproteobacteria</taxon>
        <taxon>Enterobacterales</taxon>
        <taxon>Enterobacteriaceae</taxon>
        <taxon>Escherichia</taxon>
    </lineage>
</organism>
<name>YQIA_ECO57</name>
<sequence length="193" mass="21642">MSTLLYLHGFNSSPRSAKASLLKNWLAEHHPDVEMIIPQLPPYPSDAAELLESIVLEHGGDSLGIVGSSLGGYYATWLSQCFMLPAVVVNPAVRPFELLTDYLGQNENPYTGQQYVLESRHIYDLKVMQIDPLEAPDLIWLLQQTGDEVLDYRQAVAYYASCRQTVIEGGNHAFTGFEDYFNPIVDFLGLHHL</sequence>
<protein>
    <recommendedName>
        <fullName>Esterase YqiA</fullName>
        <ecNumber>3.1.-.-</ecNumber>
    </recommendedName>
</protein>
<dbReference type="EC" id="3.1.-.-"/>
<dbReference type="EMBL" id="AE005174">
    <property type="protein sequence ID" value="AAG58170.1"/>
    <property type="molecule type" value="Genomic_DNA"/>
</dbReference>
<dbReference type="EMBL" id="BA000007">
    <property type="protein sequence ID" value="BAB37342.1"/>
    <property type="molecule type" value="Genomic_DNA"/>
</dbReference>
<dbReference type="PIR" id="F85963">
    <property type="entry name" value="F85963"/>
</dbReference>
<dbReference type="PIR" id="G91118">
    <property type="entry name" value="G91118"/>
</dbReference>
<dbReference type="RefSeq" id="NP_311946.1">
    <property type="nucleotide sequence ID" value="NC_002695.1"/>
</dbReference>
<dbReference type="RefSeq" id="WP_000105733.1">
    <property type="nucleotide sequence ID" value="NZ_VOAI01000009.1"/>
</dbReference>
<dbReference type="SMR" id="P0A8Z9"/>
<dbReference type="STRING" id="155864.Z4388"/>
<dbReference type="ESTHER" id="ecoli-yqia">
    <property type="family name" value="abh_upf00227"/>
</dbReference>
<dbReference type="MEROPS" id="S09.A40"/>
<dbReference type="GeneID" id="916254"/>
<dbReference type="GeneID" id="93778962"/>
<dbReference type="KEGG" id="ece:Z4388"/>
<dbReference type="KEGG" id="ecs:ECs_3919"/>
<dbReference type="PATRIC" id="fig|386585.9.peg.4087"/>
<dbReference type="eggNOG" id="COG3150">
    <property type="taxonomic scope" value="Bacteria"/>
</dbReference>
<dbReference type="HOGENOM" id="CLU_090996_2_0_6"/>
<dbReference type="OMA" id="MLAHYPG"/>
<dbReference type="Proteomes" id="UP000000558">
    <property type="component" value="Chromosome"/>
</dbReference>
<dbReference type="Proteomes" id="UP000002519">
    <property type="component" value="Chromosome"/>
</dbReference>
<dbReference type="GO" id="GO:0052689">
    <property type="term" value="F:carboxylic ester hydrolase activity"/>
    <property type="evidence" value="ECO:0007669"/>
    <property type="project" value="UniProtKB-KW"/>
</dbReference>
<dbReference type="FunFam" id="3.40.50.1820:FF:000027">
    <property type="entry name" value="Esterase YqiA"/>
    <property type="match status" value="1"/>
</dbReference>
<dbReference type="Gene3D" id="3.40.50.1820">
    <property type="entry name" value="alpha/beta hydrolase"/>
    <property type="match status" value="1"/>
</dbReference>
<dbReference type="InterPro" id="IPR029058">
    <property type="entry name" value="AB_hydrolase_fold"/>
</dbReference>
<dbReference type="InterPro" id="IPR008886">
    <property type="entry name" value="UPF0227/Esterase_YqiA"/>
</dbReference>
<dbReference type="NCBIfam" id="NF008291">
    <property type="entry name" value="PRK11071.1"/>
    <property type="match status" value="1"/>
</dbReference>
<dbReference type="PANTHER" id="PTHR35602:SF3">
    <property type="entry name" value="ESTERASE YQIA"/>
    <property type="match status" value="1"/>
</dbReference>
<dbReference type="PANTHER" id="PTHR35602">
    <property type="entry name" value="ESTERASE YQIA-RELATED"/>
    <property type="match status" value="1"/>
</dbReference>
<dbReference type="Pfam" id="PF05728">
    <property type="entry name" value="UPF0227"/>
    <property type="match status" value="1"/>
</dbReference>
<dbReference type="SUPFAM" id="SSF53474">
    <property type="entry name" value="alpha/beta-Hydrolases"/>
    <property type="match status" value="1"/>
</dbReference>
<comment type="function">
    <text evidence="1">Displays esterase activity toward palmitoyl-CoA and pNP-butyrate.</text>
</comment>